<proteinExistence type="inferred from homology"/>
<evidence type="ECO:0000255" key="1">
    <source>
        <dbReference type="HAMAP-Rule" id="MF_01331"/>
    </source>
</evidence>
<evidence type="ECO:0000305" key="2"/>
<feature type="chain" id="PRO_0000243151" description="Large ribosomal subunit protein uL22">
    <location>
        <begin position="1"/>
        <end position="141"/>
    </location>
</feature>
<accession>Q2JFH1</accession>
<gene>
    <name evidence="1" type="primary">rplV</name>
    <name type="ordered locus">Francci3_0587</name>
</gene>
<sequence>MADDLVDGLTRAGLPGAKASARYVRVSPTKARRVVDLVRGRSVGEALDILRFAPQAASEDVYKVVASAAANAENNHSLDPATLWVGEVYVDEGPTLKRIRPRAQGRAYRIRKRTSHITVVVESREPVSAAGRGAKTTRRAR</sequence>
<dbReference type="EMBL" id="CP000249">
    <property type="protein sequence ID" value="ABD09971.1"/>
    <property type="molecule type" value="Genomic_DNA"/>
</dbReference>
<dbReference type="RefSeq" id="WP_011435044.1">
    <property type="nucleotide sequence ID" value="NZ_LRTJ01000013.1"/>
</dbReference>
<dbReference type="SMR" id="Q2JFH1"/>
<dbReference type="STRING" id="106370.Francci3_0587"/>
<dbReference type="KEGG" id="fra:Francci3_0587"/>
<dbReference type="eggNOG" id="COG0091">
    <property type="taxonomic scope" value="Bacteria"/>
</dbReference>
<dbReference type="HOGENOM" id="CLU_083987_3_2_11"/>
<dbReference type="OrthoDB" id="9805969at2"/>
<dbReference type="PhylomeDB" id="Q2JFH1"/>
<dbReference type="Proteomes" id="UP000001937">
    <property type="component" value="Chromosome"/>
</dbReference>
<dbReference type="GO" id="GO:0022625">
    <property type="term" value="C:cytosolic large ribosomal subunit"/>
    <property type="evidence" value="ECO:0007669"/>
    <property type="project" value="TreeGrafter"/>
</dbReference>
<dbReference type="GO" id="GO:0019843">
    <property type="term" value="F:rRNA binding"/>
    <property type="evidence" value="ECO:0007669"/>
    <property type="project" value="UniProtKB-UniRule"/>
</dbReference>
<dbReference type="GO" id="GO:0003735">
    <property type="term" value="F:structural constituent of ribosome"/>
    <property type="evidence" value="ECO:0007669"/>
    <property type="project" value="InterPro"/>
</dbReference>
<dbReference type="GO" id="GO:0006412">
    <property type="term" value="P:translation"/>
    <property type="evidence" value="ECO:0007669"/>
    <property type="project" value="UniProtKB-UniRule"/>
</dbReference>
<dbReference type="CDD" id="cd00336">
    <property type="entry name" value="Ribosomal_L22"/>
    <property type="match status" value="1"/>
</dbReference>
<dbReference type="FunFam" id="3.90.470.10:FF:000002">
    <property type="entry name" value="50S ribosomal protein L22"/>
    <property type="match status" value="1"/>
</dbReference>
<dbReference type="Gene3D" id="3.90.470.10">
    <property type="entry name" value="Ribosomal protein L22/L17"/>
    <property type="match status" value="1"/>
</dbReference>
<dbReference type="HAMAP" id="MF_01331_B">
    <property type="entry name" value="Ribosomal_uL22_B"/>
    <property type="match status" value="1"/>
</dbReference>
<dbReference type="InterPro" id="IPR001063">
    <property type="entry name" value="Ribosomal_uL22"/>
</dbReference>
<dbReference type="InterPro" id="IPR005727">
    <property type="entry name" value="Ribosomal_uL22_bac/chlpt-type"/>
</dbReference>
<dbReference type="InterPro" id="IPR047867">
    <property type="entry name" value="Ribosomal_uL22_bac/org-type"/>
</dbReference>
<dbReference type="InterPro" id="IPR018260">
    <property type="entry name" value="Ribosomal_uL22_CS"/>
</dbReference>
<dbReference type="InterPro" id="IPR036394">
    <property type="entry name" value="Ribosomal_uL22_sf"/>
</dbReference>
<dbReference type="NCBIfam" id="TIGR01044">
    <property type="entry name" value="rplV_bact"/>
    <property type="match status" value="1"/>
</dbReference>
<dbReference type="PANTHER" id="PTHR13501">
    <property type="entry name" value="CHLOROPLAST 50S RIBOSOMAL PROTEIN L22-RELATED"/>
    <property type="match status" value="1"/>
</dbReference>
<dbReference type="PANTHER" id="PTHR13501:SF8">
    <property type="entry name" value="LARGE RIBOSOMAL SUBUNIT PROTEIN UL22M"/>
    <property type="match status" value="1"/>
</dbReference>
<dbReference type="Pfam" id="PF00237">
    <property type="entry name" value="Ribosomal_L22"/>
    <property type="match status" value="1"/>
</dbReference>
<dbReference type="SUPFAM" id="SSF54843">
    <property type="entry name" value="Ribosomal protein L22"/>
    <property type="match status" value="1"/>
</dbReference>
<dbReference type="PROSITE" id="PS00464">
    <property type="entry name" value="RIBOSOMAL_L22"/>
    <property type="match status" value="1"/>
</dbReference>
<name>RL22_FRACC</name>
<protein>
    <recommendedName>
        <fullName evidence="1">Large ribosomal subunit protein uL22</fullName>
    </recommendedName>
    <alternativeName>
        <fullName evidence="2">50S ribosomal protein L22</fullName>
    </alternativeName>
</protein>
<reference key="1">
    <citation type="journal article" date="2007" name="Genome Res.">
        <title>Genome characteristics of facultatively symbiotic Frankia sp. strains reflect host range and host plant biogeography.</title>
        <authorList>
            <person name="Normand P."/>
            <person name="Lapierre P."/>
            <person name="Tisa L.S."/>
            <person name="Gogarten J.P."/>
            <person name="Alloisio N."/>
            <person name="Bagnarol E."/>
            <person name="Bassi C.A."/>
            <person name="Berry A.M."/>
            <person name="Bickhart D.M."/>
            <person name="Choisne N."/>
            <person name="Couloux A."/>
            <person name="Cournoyer B."/>
            <person name="Cruveiller S."/>
            <person name="Daubin V."/>
            <person name="Demange N."/>
            <person name="Francino M.P."/>
            <person name="Goltsman E."/>
            <person name="Huang Y."/>
            <person name="Kopp O.R."/>
            <person name="Labarre L."/>
            <person name="Lapidus A."/>
            <person name="Lavire C."/>
            <person name="Marechal J."/>
            <person name="Martinez M."/>
            <person name="Mastronunzio J.E."/>
            <person name="Mullin B.C."/>
            <person name="Niemann J."/>
            <person name="Pujic P."/>
            <person name="Rawnsley T."/>
            <person name="Rouy Z."/>
            <person name="Schenowitz C."/>
            <person name="Sellstedt A."/>
            <person name="Tavares F."/>
            <person name="Tomkins J.P."/>
            <person name="Vallenet D."/>
            <person name="Valverde C."/>
            <person name="Wall L.G."/>
            <person name="Wang Y."/>
            <person name="Medigue C."/>
            <person name="Benson D.R."/>
        </authorList>
    </citation>
    <scope>NUCLEOTIDE SEQUENCE [LARGE SCALE GENOMIC DNA]</scope>
    <source>
        <strain>DSM 45818 / CECT 9043 / HFP020203 / CcI3</strain>
    </source>
</reference>
<keyword id="KW-1185">Reference proteome</keyword>
<keyword id="KW-0687">Ribonucleoprotein</keyword>
<keyword id="KW-0689">Ribosomal protein</keyword>
<keyword id="KW-0694">RNA-binding</keyword>
<keyword id="KW-0699">rRNA-binding</keyword>
<organism>
    <name type="scientific">Frankia casuarinae (strain DSM 45818 / CECT 9043 / HFP020203 / CcI3)</name>
    <dbReference type="NCBI Taxonomy" id="106370"/>
    <lineage>
        <taxon>Bacteria</taxon>
        <taxon>Bacillati</taxon>
        <taxon>Actinomycetota</taxon>
        <taxon>Actinomycetes</taxon>
        <taxon>Frankiales</taxon>
        <taxon>Frankiaceae</taxon>
        <taxon>Frankia</taxon>
    </lineage>
</organism>
<comment type="function">
    <text evidence="1">This protein binds specifically to 23S rRNA; its binding is stimulated by other ribosomal proteins, e.g. L4, L17, and L20. It is important during the early stages of 50S assembly. It makes multiple contacts with different domains of the 23S rRNA in the assembled 50S subunit and ribosome (By similarity).</text>
</comment>
<comment type="function">
    <text evidence="1">The globular domain of the protein is located near the polypeptide exit tunnel on the outside of the subunit, while an extended beta-hairpin is found that lines the wall of the exit tunnel in the center of the 70S ribosome.</text>
</comment>
<comment type="subunit">
    <text evidence="1">Part of the 50S ribosomal subunit.</text>
</comment>
<comment type="similarity">
    <text evidence="1">Belongs to the universal ribosomal protein uL22 family.</text>
</comment>